<organism>
    <name type="scientific">Streptomyces avermitilis (strain ATCC 31267 / DSM 46492 / JCM 5070 / NBRC 14893 / NCIMB 12804 / NRRL 8165 / MA-4680)</name>
    <dbReference type="NCBI Taxonomy" id="227882"/>
    <lineage>
        <taxon>Bacteria</taxon>
        <taxon>Bacillati</taxon>
        <taxon>Actinomycetota</taxon>
        <taxon>Actinomycetes</taxon>
        <taxon>Kitasatosporales</taxon>
        <taxon>Streptomycetaceae</taxon>
        <taxon>Streptomyces</taxon>
    </lineage>
</organism>
<keyword id="KW-1003">Cell membrane</keyword>
<keyword id="KW-0472">Membrane</keyword>
<keyword id="KW-0520">NAD</keyword>
<keyword id="KW-0874">Quinone</keyword>
<keyword id="KW-1185">Reference proteome</keyword>
<keyword id="KW-1278">Translocase</keyword>
<keyword id="KW-0812">Transmembrane</keyword>
<keyword id="KW-1133">Transmembrane helix</keyword>
<keyword id="KW-0813">Transport</keyword>
<dbReference type="EC" id="7.1.1.-" evidence="1"/>
<dbReference type="EMBL" id="BA000030">
    <property type="protein sequence ID" value="BAC72599.1"/>
    <property type="molecule type" value="Genomic_DNA"/>
</dbReference>
<dbReference type="SMR" id="Q82DT1"/>
<dbReference type="GeneID" id="41541967"/>
<dbReference type="KEGG" id="sma:SAVERM_4887"/>
<dbReference type="eggNOG" id="COG0713">
    <property type="taxonomic scope" value="Bacteria"/>
</dbReference>
<dbReference type="HOGENOM" id="CLU_144724_1_0_11"/>
<dbReference type="OrthoDB" id="9810120at2"/>
<dbReference type="Proteomes" id="UP000000428">
    <property type="component" value="Chromosome"/>
</dbReference>
<dbReference type="GO" id="GO:0030964">
    <property type="term" value="C:NADH dehydrogenase complex"/>
    <property type="evidence" value="ECO:0007669"/>
    <property type="project" value="TreeGrafter"/>
</dbReference>
<dbReference type="GO" id="GO:0005886">
    <property type="term" value="C:plasma membrane"/>
    <property type="evidence" value="ECO:0007669"/>
    <property type="project" value="UniProtKB-SubCell"/>
</dbReference>
<dbReference type="GO" id="GO:0050136">
    <property type="term" value="F:NADH:ubiquinone reductase (non-electrogenic) activity"/>
    <property type="evidence" value="ECO:0007669"/>
    <property type="project" value="UniProtKB-UniRule"/>
</dbReference>
<dbReference type="GO" id="GO:0048038">
    <property type="term" value="F:quinone binding"/>
    <property type="evidence" value="ECO:0007669"/>
    <property type="project" value="UniProtKB-KW"/>
</dbReference>
<dbReference type="GO" id="GO:0042773">
    <property type="term" value="P:ATP synthesis coupled electron transport"/>
    <property type="evidence" value="ECO:0007669"/>
    <property type="project" value="InterPro"/>
</dbReference>
<dbReference type="FunFam" id="1.10.287.3510:FF:000001">
    <property type="entry name" value="NADH-quinone oxidoreductase subunit K"/>
    <property type="match status" value="1"/>
</dbReference>
<dbReference type="Gene3D" id="1.10.287.3510">
    <property type="match status" value="1"/>
</dbReference>
<dbReference type="HAMAP" id="MF_01456">
    <property type="entry name" value="NDH1_NuoK"/>
    <property type="match status" value="1"/>
</dbReference>
<dbReference type="InterPro" id="IPR001133">
    <property type="entry name" value="NADH_UbQ_OxRdtase_chain4L/K"/>
</dbReference>
<dbReference type="InterPro" id="IPR039428">
    <property type="entry name" value="NUOK/Mnh_C1-like"/>
</dbReference>
<dbReference type="NCBIfam" id="NF004320">
    <property type="entry name" value="PRK05715.1-2"/>
    <property type="match status" value="1"/>
</dbReference>
<dbReference type="PANTHER" id="PTHR11434:SF16">
    <property type="entry name" value="NADH-UBIQUINONE OXIDOREDUCTASE CHAIN 4L"/>
    <property type="match status" value="1"/>
</dbReference>
<dbReference type="PANTHER" id="PTHR11434">
    <property type="entry name" value="NADH-UBIQUINONE OXIDOREDUCTASE SUBUNIT ND4L"/>
    <property type="match status" value="1"/>
</dbReference>
<dbReference type="Pfam" id="PF00420">
    <property type="entry name" value="Oxidored_q2"/>
    <property type="match status" value="1"/>
</dbReference>
<evidence type="ECO:0000255" key="1">
    <source>
        <dbReference type="HAMAP-Rule" id="MF_01456"/>
    </source>
</evidence>
<evidence type="ECO:0000256" key="2">
    <source>
        <dbReference type="SAM" id="MobiDB-lite"/>
    </source>
</evidence>
<reference key="1">
    <citation type="journal article" date="2003" name="Nat. Biotechnol.">
        <title>Complete genome sequence and comparative analysis of the industrial microorganism Streptomyces avermitilis.</title>
        <authorList>
            <person name="Ikeda H."/>
            <person name="Ishikawa J."/>
            <person name="Hanamoto A."/>
            <person name="Shinose M."/>
            <person name="Kikuchi H."/>
            <person name="Shiba T."/>
            <person name="Sakaki Y."/>
            <person name="Hattori M."/>
            <person name="Omura S."/>
        </authorList>
    </citation>
    <scope>NUCLEOTIDE SEQUENCE [LARGE SCALE GENOMIC DNA]</scope>
    <source>
        <strain>ATCC 31267 / DSM 46492 / JCM 5070 / NBRC 14893 / NCIMB 12804 / NRRL 8165 / MA-4680</strain>
    </source>
</reference>
<reference key="2">
    <citation type="journal article" date="2001" name="Proc. Natl. Acad. Sci. U.S.A.">
        <title>Genome sequence of an industrial microorganism Streptomyces avermitilis: deducing the ability of producing secondary metabolites.</title>
        <authorList>
            <person name="Omura S."/>
            <person name="Ikeda H."/>
            <person name="Ishikawa J."/>
            <person name="Hanamoto A."/>
            <person name="Takahashi C."/>
            <person name="Shinose M."/>
            <person name="Takahashi Y."/>
            <person name="Horikawa H."/>
            <person name="Nakazawa H."/>
            <person name="Osonoe T."/>
            <person name="Kikuchi H."/>
            <person name="Shiba T."/>
            <person name="Sakaki Y."/>
            <person name="Hattori M."/>
        </authorList>
    </citation>
    <scope>NUCLEOTIDE SEQUENCE [LARGE SCALE GENOMIC DNA]</scope>
    <source>
        <strain>ATCC 31267 / DSM 46492 / JCM 5070 / NBRC 14893 / NCIMB 12804 / NRRL 8165 / MA-4680</strain>
    </source>
</reference>
<gene>
    <name evidence="1" type="primary">nuoK2</name>
    <name type="ordered locus">SAV_4887</name>
</gene>
<proteinExistence type="inferred from homology"/>
<feature type="chain" id="PRO_0000390249" description="NADH-quinone oxidoreductase subunit K 2">
    <location>
        <begin position="1"/>
        <end position="129"/>
    </location>
</feature>
<feature type="transmembrane region" description="Helical" evidence="1">
    <location>
        <begin position="3"/>
        <end position="23"/>
    </location>
</feature>
<feature type="transmembrane region" description="Helical" evidence="1">
    <location>
        <begin position="28"/>
        <end position="48"/>
    </location>
</feature>
<feature type="transmembrane region" description="Helical" evidence="1">
    <location>
        <begin position="68"/>
        <end position="88"/>
    </location>
</feature>
<feature type="region of interest" description="Disordered" evidence="2">
    <location>
        <begin position="98"/>
        <end position="129"/>
    </location>
</feature>
<feature type="compositionally biased region" description="Low complexity" evidence="2">
    <location>
        <begin position="111"/>
        <end position="122"/>
    </location>
</feature>
<comment type="function">
    <text evidence="1">NDH-1 shuttles electrons from NADH, via FMN and iron-sulfur (Fe-S) centers, to quinones in the respiratory chain. The immediate electron acceptor for the enzyme in this species is believed to be a menaquinone. Couples the redox reaction to proton translocation (for every two electrons transferred, four hydrogen ions are translocated across the cytoplasmic membrane), and thus conserves the redox energy in a proton gradient.</text>
</comment>
<comment type="catalytic activity">
    <reaction evidence="1">
        <text>a quinone + NADH + 5 H(+)(in) = a quinol + NAD(+) + 4 H(+)(out)</text>
        <dbReference type="Rhea" id="RHEA:57888"/>
        <dbReference type="ChEBI" id="CHEBI:15378"/>
        <dbReference type="ChEBI" id="CHEBI:24646"/>
        <dbReference type="ChEBI" id="CHEBI:57540"/>
        <dbReference type="ChEBI" id="CHEBI:57945"/>
        <dbReference type="ChEBI" id="CHEBI:132124"/>
    </reaction>
</comment>
<comment type="subunit">
    <text evidence="1">NDH-1 is composed of 14 different subunits. Subunits NuoA, H, J, K, L, M, N constitute the membrane sector of the complex.</text>
</comment>
<comment type="subcellular location">
    <subcellularLocation>
        <location evidence="1">Cell membrane</location>
        <topology evidence="1">Multi-pass membrane protein</topology>
    </subcellularLocation>
</comment>
<comment type="similarity">
    <text evidence="1">Belongs to the complex I subunit 4L family.</text>
</comment>
<name>NUOK2_STRAW</name>
<accession>Q82DT1</accession>
<sequence>MHLAYPAVLSALLFSTGLYGVLARRNAILVLMSVELMLNAVNLNLVAFDVWLSKTARDTLHSGQALTLFTIAIAAAEIGIGLAIVLAVYRNRGTSDIDKLRDTAEGPEPDGPGTDGSAPTAAEKAEATA</sequence>
<protein>
    <recommendedName>
        <fullName evidence="1">NADH-quinone oxidoreductase subunit K 2</fullName>
        <ecNumber evidence="1">7.1.1.-</ecNumber>
    </recommendedName>
    <alternativeName>
        <fullName evidence="1">NADH dehydrogenase I subunit K 2</fullName>
    </alternativeName>
    <alternativeName>
        <fullName evidence="1">NDH-1 subunit K 2</fullName>
    </alternativeName>
</protein>